<evidence type="ECO:0000255" key="1">
    <source>
        <dbReference type="HAMAP-Rule" id="MF_00644"/>
    </source>
</evidence>
<proteinExistence type="inferred from homology"/>
<geneLocation type="chloroplast"/>
<sequence>MTIAFQLAVFALISTSLILLIGVPVVFASPEGWSSNKNIVFSGTSLWIGLVFLVGILNSLIS</sequence>
<accession>Q06FV9</accession>
<feature type="chain" id="PRO_0000277228" description="Photosystem II reaction center protein Z">
    <location>
        <begin position="1"/>
        <end position="62"/>
    </location>
</feature>
<feature type="transmembrane region" description="Helical" evidence="1">
    <location>
        <begin position="8"/>
        <end position="28"/>
    </location>
</feature>
<feature type="transmembrane region" description="Helical" evidence="1">
    <location>
        <begin position="41"/>
        <end position="61"/>
    </location>
</feature>
<protein>
    <recommendedName>
        <fullName evidence="1">Photosystem II reaction center protein Z</fullName>
        <shortName evidence="1">PSII-Z</shortName>
    </recommendedName>
</protein>
<reference key="1">
    <citation type="journal article" date="2006" name="Mol. Biol. Evol.">
        <title>The complete chloroplast genome sequence of Pelargonium x hortorum: organization and evolution of the largest and most highly rearranged chloroplast genome of land plants.</title>
        <authorList>
            <person name="Chumley T.W."/>
            <person name="Palmer J.D."/>
            <person name="Mower J.P."/>
            <person name="Fourcade H.M."/>
            <person name="Calie P.J."/>
            <person name="Boore J.L."/>
            <person name="Jansen R.K."/>
        </authorList>
    </citation>
    <scope>NUCLEOTIDE SEQUENCE [LARGE SCALE GENOMIC DNA]</scope>
    <source>
        <strain>cv. Ringo White</strain>
    </source>
</reference>
<gene>
    <name evidence="1" type="primary">psbZ</name>
</gene>
<dbReference type="EMBL" id="DQ897681">
    <property type="protein sequence ID" value="ABI17263.1"/>
    <property type="molecule type" value="Genomic_DNA"/>
</dbReference>
<dbReference type="RefSeq" id="YP_784072.1">
    <property type="nucleotide sequence ID" value="NC_008454.1"/>
</dbReference>
<dbReference type="SMR" id="Q06FV9"/>
<dbReference type="GeneID" id="4362909"/>
<dbReference type="GO" id="GO:0009535">
    <property type="term" value="C:chloroplast thylakoid membrane"/>
    <property type="evidence" value="ECO:0007669"/>
    <property type="project" value="UniProtKB-SubCell"/>
</dbReference>
<dbReference type="GO" id="GO:0009539">
    <property type="term" value="C:photosystem II reaction center"/>
    <property type="evidence" value="ECO:0007669"/>
    <property type="project" value="InterPro"/>
</dbReference>
<dbReference type="GO" id="GO:0015979">
    <property type="term" value="P:photosynthesis"/>
    <property type="evidence" value="ECO:0007669"/>
    <property type="project" value="UniProtKB-UniRule"/>
</dbReference>
<dbReference type="GO" id="GO:0042549">
    <property type="term" value="P:photosystem II stabilization"/>
    <property type="evidence" value="ECO:0007669"/>
    <property type="project" value="InterPro"/>
</dbReference>
<dbReference type="FunFam" id="1.10.287.740:FF:000001">
    <property type="entry name" value="Photosystem II reaction center protein Z"/>
    <property type="match status" value="1"/>
</dbReference>
<dbReference type="Gene3D" id="1.10.287.740">
    <property type="entry name" value="Photosystem II PsbZ, reaction centre"/>
    <property type="match status" value="1"/>
</dbReference>
<dbReference type="HAMAP" id="MF_00644">
    <property type="entry name" value="PSII_PsbZ"/>
    <property type="match status" value="1"/>
</dbReference>
<dbReference type="InterPro" id="IPR002644">
    <property type="entry name" value="PSII_PsbZ"/>
</dbReference>
<dbReference type="InterPro" id="IPR036512">
    <property type="entry name" value="PSII_PsbZ_sf"/>
</dbReference>
<dbReference type="NCBIfam" id="TIGR03043">
    <property type="entry name" value="PS_II_psbZ"/>
    <property type="match status" value="1"/>
</dbReference>
<dbReference type="PANTHER" id="PTHR34971">
    <property type="entry name" value="PHOTOSYSTEM II REACTION CENTER PROTEIN Z"/>
    <property type="match status" value="1"/>
</dbReference>
<dbReference type="PANTHER" id="PTHR34971:SF2">
    <property type="entry name" value="PHOTOSYSTEM II REACTION CENTER PROTEIN Z"/>
    <property type="match status" value="1"/>
</dbReference>
<dbReference type="Pfam" id="PF01737">
    <property type="entry name" value="Ycf9"/>
    <property type="match status" value="1"/>
</dbReference>
<dbReference type="SUPFAM" id="SSF161055">
    <property type="entry name" value="PsbZ-like"/>
    <property type="match status" value="1"/>
</dbReference>
<name>PSBZ_PELHO</name>
<organism>
    <name type="scientific">Pelargonium hortorum</name>
    <name type="common">Common geranium</name>
    <name type="synonym">Pelargonium inquinans x Pelargonium zonale</name>
    <dbReference type="NCBI Taxonomy" id="4031"/>
    <lineage>
        <taxon>Eukaryota</taxon>
        <taxon>Viridiplantae</taxon>
        <taxon>Streptophyta</taxon>
        <taxon>Embryophyta</taxon>
        <taxon>Tracheophyta</taxon>
        <taxon>Spermatophyta</taxon>
        <taxon>Magnoliopsida</taxon>
        <taxon>eudicotyledons</taxon>
        <taxon>Gunneridae</taxon>
        <taxon>Pentapetalae</taxon>
        <taxon>rosids</taxon>
        <taxon>malvids</taxon>
        <taxon>Geraniales</taxon>
        <taxon>Geraniaceae</taxon>
        <taxon>Pelargonium</taxon>
    </lineage>
</organism>
<keyword id="KW-0150">Chloroplast</keyword>
<keyword id="KW-0472">Membrane</keyword>
<keyword id="KW-0602">Photosynthesis</keyword>
<keyword id="KW-0604">Photosystem II</keyword>
<keyword id="KW-0934">Plastid</keyword>
<keyword id="KW-0674">Reaction center</keyword>
<keyword id="KW-0793">Thylakoid</keyword>
<keyword id="KW-0812">Transmembrane</keyword>
<keyword id="KW-1133">Transmembrane helix</keyword>
<comment type="function">
    <text evidence="1">May control the interaction of photosystem II (PSII) cores with the light-harvesting antenna, regulates electron flow through the 2 photosystem reaction centers. PSII is a light-driven water plastoquinone oxidoreductase, using light energy to abstract electrons from H(2)O, generating a proton gradient subsequently used for ATP formation.</text>
</comment>
<comment type="subunit">
    <text evidence="1">PSII is composed of 1 copy each of membrane proteins PsbA, PsbB, PsbC, PsbD, PsbE, PsbF, PsbH, PsbI, PsbJ, PsbK, PsbL, PsbM, PsbT, PsbY, PsbZ, Psb30/Ycf12, at least 3 peripheral proteins of the oxygen-evolving complex and a large number of cofactors. It forms dimeric complexes.</text>
</comment>
<comment type="subcellular location">
    <subcellularLocation>
        <location evidence="1">Plastid</location>
        <location evidence="1">Chloroplast thylakoid membrane</location>
        <topology evidence="1">Multi-pass membrane protein</topology>
    </subcellularLocation>
</comment>
<comment type="similarity">
    <text evidence="1">Belongs to the PsbZ family.</text>
</comment>